<keyword id="KW-0378">Hydrolase</keyword>
<keyword id="KW-0479">Metal-binding</keyword>
<keyword id="KW-0546">Nucleotide metabolism</keyword>
<keyword id="KW-1185">Reference proteome</keyword>
<keyword id="KW-0862">Zinc</keyword>
<sequence>MTIKPVSQERLPELLRTIPKAELHIHIEGSLEPELMFALAQRNGVSIPYPDVASLRAAYVFDNLQSFLDIYHAGTLVLRTEQDFYDMTHAYLARAAADNVLHAEIFFDPQTHTAHGVSADVVINGLYRACVDARVEFDMNASLILCFLRHLSEQEAFECLEQALPHLDKLVGVGLASSEMGHPPEKFARVFARARELGLRLVAHAGEEGPPAYIWSALDVLKVERIDHGVQAVQDPLLMARLARDRIALTVCPLSNLKLRVFPTLAAHNLGRLLEAGIVATVNSDDPSYFGGYINQNFTQTFAALGLTAQHAYQLAHNSFEASFIDDRLKRQYFDRLAGVFETFE</sequence>
<gene>
    <name type="ordered locus">Rfer_3297</name>
</gene>
<dbReference type="EC" id="3.5.4.2" evidence="1"/>
<dbReference type="EMBL" id="CP000267">
    <property type="protein sequence ID" value="ABD71006.1"/>
    <property type="molecule type" value="Genomic_DNA"/>
</dbReference>
<dbReference type="RefSeq" id="WP_011465569.1">
    <property type="nucleotide sequence ID" value="NC_007908.1"/>
</dbReference>
<dbReference type="SMR" id="Q21T97"/>
<dbReference type="STRING" id="338969.Rfer_3297"/>
<dbReference type="KEGG" id="rfr:Rfer_3297"/>
<dbReference type="eggNOG" id="COG1816">
    <property type="taxonomic scope" value="Bacteria"/>
</dbReference>
<dbReference type="HOGENOM" id="CLU_039228_7_0_4"/>
<dbReference type="OrthoDB" id="105475at2"/>
<dbReference type="Proteomes" id="UP000008332">
    <property type="component" value="Chromosome"/>
</dbReference>
<dbReference type="GO" id="GO:0005829">
    <property type="term" value="C:cytosol"/>
    <property type="evidence" value="ECO:0007669"/>
    <property type="project" value="TreeGrafter"/>
</dbReference>
<dbReference type="GO" id="GO:0000034">
    <property type="term" value="F:adenine deaminase activity"/>
    <property type="evidence" value="ECO:0007669"/>
    <property type="project" value="UniProtKB-UniRule"/>
</dbReference>
<dbReference type="GO" id="GO:0008270">
    <property type="term" value="F:zinc ion binding"/>
    <property type="evidence" value="ECO:0007669"/>
    <property type="project" value="UniProtKB-UniRule"/>
</dbReference>
<dbReference type="GO" id="GO:0006146">
    <property type="term" value="P:adenine catabolic process"/>
    <property type="evidence" value="ECO:0007669"/>
    <property type="project" value="UniProtKB-UniRule"/>
</dbReference>
<dbReference type="GO" id="GO:0043103">
    <property type="term" value="P:hypoxanthine salvage"/>
    <property type="evidence" value="ECO:0007669"/>
    <property type="project" value="UniProtKB-UniRule"/>
</dbReference>
<dbReference type="GO" id="GO:0009117">
    <property type="term" value="P:nucleotide metabolic process"/>
    <property type="evidence" value="ECO:0007669"/>
    <property type="project" value="UniProtKB-KW"/>
</dbReference>
<dbReference type="CDD" id="cd01320">
    <property type="entry name" value="ADA"/>
    <property type="match status" value="1"/>
</dbReference>
<dbReference type="FunFam" id="3.20.20.140:FF:000039">
    <property type="entry name" value="Adenine deaminase"/>
    <property type="match status" value="1"/>
</dbReference>
<dbReference type="Gene3D" id="3.20.20.140">
    <property type="entry name" value="Metal-dependent hydrolases"/>
    <property type="match status" value="1"/>
</dbReference>
<dbReference type="HAMAP" id="MF_01962">
    <property type="entry name" value="Adenine_deaminase"/>
    <property type="match status" value="1"/>
</dbReference>
<dbReference type="InterPro" id="IPR001365">
    <property type="entry name" value="A_deaminase_dom"/>
</dbReference>
<dbReference type="InterPro" id="IPR028892">
    <property type="entry name" value="ADE"/>
</dbReference>
<dbReference type="InterPro" id="IPR006330">
    <property type="entry name" value="Ado/ade_deaminase"/>
</dbReference>
<dbReference type="InterPro" id="IPR032466">
    <property type="entry name" value="Metal_Hydrolase"/>
</dbReference>
<dbReference type="NCBIfam" id="TIGR01430">
    <property type="entry name" value="aden_deam"/>
    <property type="match status" value="1"/>
</dbReference>
<dbReference type="NCBIfam" id="NF006850">
    <property type="entry name" value="PRK09358.1-6"/>
    <property type="match status" value="1"/>
</dbReference>
<dbReference type="PANTHER" id="PTHR43114">
    <property type="entry name" value="ADENINE DEAMINASE"/>
    <property type="match status" value="1"/>
</dbReference>
<dbReference type="PANTHER" id="PTHR43114:SF6">
    <property type="entry name" value="ADENINE DEAMINASE"/>
    <property type="match status" value="1"/>
</dbReference>
<dbReference type="Pfam" id="PF00962">
    <property type="entry name" value="A_deaminase"/>
    <property type="match status" value="1"/>
</dbReference>
<dbReference type="SUPFAM" id="SSF51556">
    <property type="entry name" value="Metallo-dependent hydrolases"/>
    <property type="match status" value="1"/>
</dbReference>
<accession>Q21T97</accession>
<proteinExistence type="inferred from homology"/>
<evidence type="ECO:0000255" key="1">
    <source>
        <dbReference type="HAMAP-Rule" id="MF_01962"/>
    </source>
</evidence>
<protein>
    <recommendedName>
        <fullName evidence="1">Adenine deaminase</fullName>
        <shortName evidence="1">ADE</shortName>
        <ecNumber evidence="1">3.5.4.2</ecNumber>
    </recommendedName>
    <alternativeName>
        <fullName evidence="1">Adenine aminohydrolase</fullName>
        <shortName evidence="1">AAH</shortName>
    </alternativeName>
</protein>
<comment type="function">
    <text evidence="1">Catalyzes the hydrolytic deamination of adenine to hypoxanthine. Plays an important role in the purine salvage pathway and in nitrogen catabolism.</text>
</comment>
<comment type="catalytic activity">
    <reaction evidence="1">
        <text>adenine + H2O + H(+) = hypoxanthine + NH4(+)</text>
        <dbReference type="Rhea" id="RHEA:23688"/>
        <dbReference type="ChEBI" id="CHEBI:15377"/>
        <dbReference type="ChEBI" id="CHEBI:15378"/>
        <dbReference type="ChEBI" id="CHEBI:16708"/>
        <dbReference type="ChEBI" id="CHEBI:17368"/>
        <dbReference type="ChEBI" id="CHEBI:28938"/>
        <dbReference type="EC" id="3.5.4.2"/>
    </reaction>
</comment>
<comment type="cofactor">
    <cofactor evidence="1">
        <name>Zn(2+)</name>
        <dbReference type="ChEBI" id="CHEBI:29105"/>
    </cofactor>
    <text evidence="1">Binds 1 zinc ion per subunit.</text>
</comment>
<comment type="similarity">
    <text evidence="1">Belongs to the metallo-dependent hydrolases superfamily. Adenosine and AMP deaminases family. Adenine deaminase type 2 subfamily.</text>
</comment>
<feature type="chain" id="PRO_1000081929" description="Adenine deaminase">
    <location>
        <begin position="1"/>
        <end position="345"/>
    </location>
</feature>
<feature type="active site" description="Proton donor" evidence="1">
    <location>
        <position position="207"/>
    </location>
</feature>
<feature type="binding site" evidence="1">
    <location>
        <position position="24"/>
    </location>
    <ligand>
        <name>Zn(2+)</name>
        <dbReference type="ChEBI" id="CHEBI:29105"/>
        <note>catalytic</note>
    </ligand>
</feature>
<feature type="binding site" evidence="1">
    <location>
        <position position="26"/>
    </location>
    <ligand>
        <name>Zn(2+)</name>
        <dbReference type="ChEBI" id="CHEBI:29105"/>
        <note>catalytic</note>
    </ligand>
</feature>
<feature type="binding site" evidence="1">
    <location>
        <position position="204"/>
    </location>
    <ligand>
        <name>Zn(2+)</name>
        <dbReference type="ChEBI" id="CHEBI:29105"/>
        <note>catalytic</note>
    </ligand>
</feature>
<feature type="binding site" evidence="1">
    <location>
        <position position="285"/>
    </location>
    <ligand>
        <name>Zn(2+)</name>
        <dbReference type="ChEBI" id="CHEBI:29105"/>
        <note>catalytic</note>
    </ligand>
</feature>
<feature type="binding site" evidence="1">
    <location>
        <position position="286"/>
    </location>
    <ligand>
        <name>substrate</name>
    </ligand>
</feature>
<feature type="site" description="Important for catalytic activity" evidence="1">
    <location>
        <position position="228"/>
    </location>
</feature>
<reference key="1">
    <citation type="submission" date="2006-02" db="EMBL/GenBank/DDBJ databases">
        <title>Complete sequence of chromosome of Rhodoferax ferrireducens DSM 15236.</title>
        <authorList>
            <person name="Copeland A."/>
            <person name="Lucas S."/>
            <person name="Lapidus A."/>
            <person name="Barry K."/>
            <person name="Detter J.C."/>
            <person name="Glavina del Rio T."/>
            <person name="Hammon N."/>
            <person name="Israni S."/>
            <person name="Pitluck S."/>
            <person name="Brettin T."/>
            <person name="Bruce D."/>
            <person name="Han C."/>
            <person name="Tapia R."/>
            <person name="Gilna P."/>
            <person name="Kiss H."/>
            <person name="Schmutz J."/>
            <person name="Larimer F."/>
            <person name="Land M."/>
            <person name="Kyrpides N."/>
            <person name="Ivanova N."/>
            <person name="Richardson P."/>
        </authorList>
    </citation>
    <scope>NUCLEOTIDE SEQUENCE [LARGE SCALE GENOMIC DNA]</scope>
    <source>
        <strain>ATCC BAA-621 / DSM 15236 / T118</strain>
    </source>
</reference>
<organism>
    <name type="scientific">Albidiferax ferrireducens (strain ATCC BAA-621 / DSM 15236 / T118)</name>
    <name type="common">Rhodoferax ferrireducens</name>
    <dbReference type="NCBI Taxonomy" id="338969"/>
    <lineage>
        <taxon>Bacteria</taxon>
        <taxon>Pseudomonadati</taxon>
        <taxon>Pseudomonadota</taxon>
        <taxon>Betaproteobacteria</taxon>
        <taxon>Burkholderiales</taxon>
        <taxon>Comamonadaceae</taxon>
        <taxon>Rhodoferax</taxon>
    </lineage>
</organism>
<name>ADE_ALBFT</name>